<comment type="function">
    <text evidence="2 3">Catalyzes the Claisen rearrangement of chorismate to prephenate. May play some role in the pathogenicity.</text>
</comment>
<comment type="catalytic activity">
    <reaction evidence="2 3">
        <text>chorismate = prephenate</text>
        <dbReference type="Rhea" id="RHEA:13897"/>
        <dbReference type="ChEBI" id="CHEBI:29748"/>
        <dbReference type="ChEBI" id="CHEBI:29934"/>
        <dbReference type="EC" id="5.4.99.5"/>
    </reaction>
    <physiologicalReaction direction="left-to-right" evidence="2 3">
        <dbReference type="Rhea" id="RHEA:13898"/>
    </physiologicalReaction>
</comment>
<comment type="activity regulation">
    <text evidence="3">Tyrosine, phenylalanine, and tryptophan moderately enhance chorismate mutase activity at low concentrations, but allosterically inhibit the enzyme at higher concentrations.</text>
</comment>
<comment type="biophysicochemical properties">
    <kinetics>
        <KM evidence="3">1200 uM for chorismate (at pH 7.5 and 37 degrees Celsius)</KM>
        <KM evidence="2">180 uM for chorismate (at pH 7.5 and 30 degrees Celsius)</KM>
        <KM evidence="6">500 uM for chorismate (with 27.5 nM of protein at pH 7.5 and 37 degrees Celsius)</KM>
        <KM evidence="6">670 uM for chorismate (with 8 nM of protein at pH 7.5 and 37 degrees Celsius)</KM>
        <Vmax evidence="3">74.0 umol/min/mg enzyme (at pH 7.5 and 37 degrees Celsius)</Vmax>
        <text evidence="2 3">kcat is 50 sec(-1) (PubMed:15654876). kcat is 26 sec(-1) (PubMed:15737998).</text>
    </kinetics>
    <phDependence>
        <text evidence="2 3">Optimum pH is 7.5. The activity is dramatically affected under alkaline conditions (pH 9.5).</text>
    </phDependence>
    <temperatureDependence>
        <text evidence="2 3">Optimum temperature is between 37 to 50 degrees Celsius. An increase in temperature does increase enzyme activity, and complete reversible denaturation of the enzyme occurs at a temperature close to 60 degrees Celsius.</text>
    </temperatureDependence>
</comment>
<comment type="pathway">
    <text evidence="8">Metabolic intermediate biosynthesis; prephenate biosynthesis; prephenate from chorismate: step 1/1.</text>
</comment>
<comment type="subunit">
    <text evidence="2 3 4 5 6">Homodimer.</text>
</comment>
<comment type="subcellular location">
    <subcellularLocation>
        <location evidence="2 3 6">Secreted</location>
    </subcellularLocation>
</comment>
<comment type="miscellaneous">
    <text evidence="10">Was identified as a high-confidence drug target.</text>
</comment>
<comment type="miscellaneous">
    <text evidence="3">In the presence of high concentrations of tyrosine, phenylalanine, and tryptophan, the enzyme is completely protected from proteolytic degradation.</text>
</comment>
<reference key="1">
    <citation type="journal article" date="1998" name="Nature">
        <title>Deciphering the biology of Mycobacterium tuberculosis from the complete genome sequence.</title>
        <authorList>
            <person name="Cole S.T."/>
            <person name="Brosch R."/>
            <person name="Parkhill J."/>
            <person name="Garnier T."/>
            <person name="Churcher C.M."/>
            <person name="Harris D.E."/>
            <person name="Gordon S.V."/>
            <person name="Eiglmeier K."/>
            <person name="Gas S."/>
            <person name="Barry C.E. III"/>
            <person name="Tekaia F."/>
            <person name="Badcock K."/>
            <person name="Basham D."/>
            <person name="Brown D."/>
            <person name="Chillingworth T."/>
            <person name="Connor R."/>
            <person name="Davies R.M."/>
            <person name="Devlin K."/>
            <person name="Feltwell T."/>
            <person name="Gentles S."/>
            <person name="Hamlin N."/>
            <person name="Holroyd S."/>
            <person name="Hornsby T."/>
            <person name="Jagels K."/>
            <person name="Krogh A."/>
            <person name="McLean J."/>
            <person name="Moule S."/>
            <person name="Murphy L.D."/>
            <person name="Oliver S."/>
            <person name="Osborne J."/>
            <person name="Quail M.A."/>
            <person name="Rajandream M.A."/>
            <person name="Rogers J."/>
            <person name="Rutter S."/>
            <person name="Seeger K."/>
            <person name="Skelton S."/>
            <person name="Squares S."/>
            <person name="Squares R."/>
            <person name="Sulston J.E."/>
            <person name="Taylor K."/>
            <person name="Whitehead S."/>
            <person name="Barrell B.G."/>
        </authorList>
    </citation>
    <scope>NUCLEOTIDE SEQUENCE [LARGE SCALE GENOMIC DNA]</scope>
    <source>
        <strain>ATCC 25618 / H37Rv</strain>
    </source>
</reference>
<reference key="2">
    <citation type="journal article" date="2005" name="FEBS J.">
        <title>Characterization of the secreted chorismate mutase from the pathogen Mycobacterium tuberculosis.</title>
        <authorList>
            <person name="Sasso S."/>
            <person name="Ramakrishnan C."/>
            <person name="Gamper M."/>
            <person name="Hilvert D."/>
            <person name="Kast P."/>
        </authorList>
    </citation>
    <scope>FUNCTION AS A CHORISMATE MUTASE</scope>
    <scope>CATALYTIC ACTIVITY</scope>
    <scope>BIOPHYSICOCHEMICAL PROPERTIES</scope>
    <scope>SUBCELLULAR LOCATION</scope>
    <scope>SUBUNIT</scope>
    <scope>IDENTIFICATION BY MASS SPECTROMETRY</scope>
    <source>
        <strain>ATCC 25618 / H37Rv</strain>
    </source>
</reference>
<reference key="3">
    <citation type="journal article" date="2005" name="J. Biol. Chem.">
        <title>Purified recombinant hypothetical protein coded by open reading frame Rv1885c of Mycobacterium tuberculosis exhibits a monofunctional AroQ class of periplasmic chorismate mutase activity.</title>
        <authorList>
            <person name="Prakash P."/>
            <person name="Aruna B."/>
            <person name="Sardesai A.A."/>
            <person name="Hasnain S.E."/>
        </authorList>
    </citation>
    <scope>FUNCTION AS A CHORISMATE MUTASE</scope>
    <scope>CATALYTIC ACTIVITY</scope>
    <scope>BIOPHYSICOCHEMICAL PROPERTIES</scope>
    <scope>ACTIVITY REGULATION</scope>
    <scope>SUBCELLULAR LOCATION</scope>
    <scope>SUBUNIT</scope>
    <source>
        <strain>ATCC 25618 / H37Rv</strain>
    </source>
</reference>
<reference key="4">
    <citation type="journal article" date="2008" name="BMC Syst. Biol.">
        <title>targetTB: a target identification pipeline for Mycobacterium tuberculosis through an interactome, reactome and genome-scale structural analysis.</title>
        <authorList>
            <person name="Raman K."/>
            <person name="Yeturu K."/>
            <person name="Chandra N."/>
        </authorList>
    </citation>
    <scope>IDENTIFICATION AS A DRUG TARGET [LARGE SCALE ANALYSIS]</scope>
</reference>
<reference key="5">
    <citation type="journal article" date="2011" name="Mol. Cell. Proteomics">
        <title>Proteogenomic analysis of Mycobacterium tuberculosis by high resolution mass spectrometry.</title>
        <authorList>
            <person name="Kelkar D.S."/>
            <person name="Kumar D."/>
            <person name="Kumar P."/>
            <person name="Balakrishnan L."/>
            <person name="Muthusamy B."/>
            <person name="Yadav A.K."/>
            <person name="Shrivastava P."/>
            <person name="Marimuthu A."/>
            <person name="Anand S."/>
            <person name="Sundaram H."/>
            <person name="Kingsbury R."/>
            <person name="Harsha H.C."/>
            <person name="Nair B."/>
            <person name="Prasad T.S."/>
            <person name="Chauhan D.S."/>
            <person name="Katoch K."/>
            <person name="Katoch V.M."/>
            <person name="Kumar P."/>
            <person name="Chaerkady R."/>
            <person name="Ramachandran S."/>
            <person name="Dash D."/>
            <person name="Pandey A."/>
        </authorList>
    </citation>
    <scope>IDENTIFICATION BY MASS SPECTROMETRY [LARGE SCALE ANALYSIS]</scope>
    <source>
        <strain>ATCC 25618 / H37Rv</strain>
    </source>
</reference>
<reference evidence="13 14" key="6">
    <citation type="journal article" date="2006" name="J. Mol. Biol.">
        <title>1.6 A crystal structure of the secreted chorismate mutase from Mycobacterium tuberculosis: novel fold topology revealed.</title>
        <authorList>
            <person name="Okvist M."/>
            <person name="Dey R."/>
            <person name="Sasso S."/>
            <person name="Grahn E."/>
            <person name="Kast P."/>
            <person name="Krengel U."/>
        </authorList>
    </citation>
    <scope>X-RAY CRYSTALLOGRAPHY (1.55 ANGSTROMS) OF 34-199 IN COMPLEX WITH SUBSTRATE ANALOGS</scope>
    <scope>SUBUNIT</scope>
    <scope>DISULFIDE BOND</scope>
    <source>
        <strain>ATCC 25618 / H37Rv</strain>
    </source>
</reference>
<reference evidence="11" key="7">
    <citation type="journal article" date="2006" name="Biochemistry">
        <title>The 2.15 A crystal structure of Mycobacterium tuberculosis chorismate mutase reveals an unexpected gene duplication and suggests a role in host-pathogen interactions.</title>
        <authorList>
            <person name="Qamra R."/>
            <person name="Prakash P."/>
            <person name="Aruna B."/>
            <person name="Hasnain S.E."/>
            <person name="Mande S.C."/>
        </authorList>
    </citation>
    <scope>X-RAY CRYSTALLOGRAPHY (2.07 ANGSTROMS) OF 35-199</scope>
    <scope>SUBUNIT</scope>
    <scope>DISULFIDE BOND</scope>
    <source>
        <strain>ATCC 25618 / H37Rv</strain>
    </source>
</reference>
<reference evidence="12" key="8">
    <citation type="journal article" date="2006" name="J. Bacteriol.">
        <title>Biochemical and structural characterization of the secreted chorismate mutase (Rv1885c) from Mycobacterium tuberculosis H37Rv: an *AroQ enzyme not regulated by the aromatic amino acids.</title>
        <authorList>
            <person name="Kim S.K."/>
            <person name="Reddy S.K."/>
            <person name="Nelson B.C."/>
            <person name="Vasquez G.B."/>
            <person name="Davis A."/>
            <person name="Howard A.J."/>
            <person name="Patterson S."/>
            <person name="Gilliland G.L."/>
            <person name="Ladner J.E."/>
            <person name="Reddy P.T."/>
        </authorList>
    </citation>
    <scope>X-RAY CRYSTALLOGRAPHY (1.70 ANGSTROMS) OF 34-199</scope>
    <scope>MUTAGENESIS OF ARG-49; LYS-60; ASP-69; ARG-72; THR-105; GLU-109 AND ARG-134</scope>
    <scope>SUBUNIT</scope>
    <scope>SUBCELLULAR LOCATION</scope>
    <scope>DISULFIDE BOND</scope>
    <source>
        <strain>ATCC 25618 / H37Rv</strain>
    </source>
</reference>
<organism>
    <name type="scientific">Mycobacterium tuberculosis (strain ATCC 25618 / H37Rv)</name>
    <dbReference type="NCBI Taxonomy" id="83332"/>
    <lineage>
        <taxon>Bacteria</taxon>
        <taxon>Bacillati</taxon>
        <taxon>Actinomycetota</taxon>
        <taxon>Actinomycetes</taxon>
        <taxon>Mycobacteriales</taxon>
        <taxon>Mycobacteriaceae</taxon>
        <taxon>Mycobacterium</taxon>
        <taxon>Mycobacterium tuberculosis complex</taxon>
    </lineage>
</organism>
<keyword id="KW-0002">3D-structure</keyword>
<keyword id="KW-1015">Disulfide bond</keyword>
<keyword id="KW-0413">Isomerase</keyword>
<keyword id="KW-1185">Reference proteome</keyword>
<keyword id="KW-0964">Secreted</keyword>
<keyword id="KW-0732">Signal</keyword>
<feature type="signal peptide" evidence="2">
    <location>
        <begin position="1"/>
        <end position="33"/>
    </location>
</feature>
<feature type="chain" id="PRO_0000414906" description="Secreted chorismate mutase">
    <location>
        <begin position="34"/>
        <end position="199"/>
    </location>
</feature>
<feature type="domain" description="Chorismate mutase" evidence="1">
    <location>
        <begin position="34"/>
        <end position="113"/>
    </location>
</feature>
<feature type="binding site" evidence="9">
    <location>
        <position position="49"/>
    </location>
    <ligand>
        <name>substrate</name>
    </ligand>
</feature>
<feature type="binding site" evidence="9">
    <location>
        <position position="60"/>
    </location>
    <ligand>
        <name>substrate</name>
    </ligand>
</feature>
<feature type="binding site" evidence="9">
    <location>
        <position position="69"/>
    </location>
    <ligand>
        <name>substrate</name>
    </ligand>
</feature>
<feature type="binding site" evidence="9">
    <location>
        <begin position="72"/>
        <end position="76"/>
    </location>
    <ligand>
        <name>substrate</name>
    </ligand>
</feature>
<feature type="binding site" evidence="9">
    <location>
        <begin position="105"/>
        <end position="109"/>
    </location>
    <ligand>
        <name>substrate</name>
    </ligand>
</feature>
<feature type="binding site" evidence="9">
    <location>
        <position position="134"/>
    </location>
    <ligand>
        <name>substrate</name>
    </ligand>
</feature>
<feature type="disulfide bond" evidence="4 5 6 11 12 13 14">
    <location>
        <begin position="160"/>
        <end position="193"/>
    </location>
</feature>
<feature type="mutagenesis site" description="Less than 1% of the wild-type enzyme activity." evidence="6">
    <original>R</original>
    <variation>A</variation>
    <location>
        <position position="49"/>
    </location>
</feature>
<feature type="mutagenesis site" description="Less than 1% of the wild-type enzyme activity." evidence="6">
    <original>K</original>
    <variation>A</variation>
    <location>
        <position position="60"/>
    </location>
</feature>
<feature type="mutagenesis site" description="No effect on the enzyme activity." evidence="6">
    <original>D</original>
    <variation>A</variation>
    <location>
        <position position="69"/>
    </location>
</feature>
<feature type="mutagenesis site" description="Less than 1% of the wild-type enzyme activity." evidence="6">
    <original>R</original>
    <variation>A</variation>
    <location>
        <position position="72"/>
    </location>
</feature>
<feature type="mutagenesis site" description="20% of the wild-type enzyme activity." evidence="6">
    <original>T</original>
    <variation>A</variation>
    <location>
        <position position="105"/>
    </location>
</feature>
<feature type="mutagenesis site" description="10% of the wild-type enzyme activity." evidence="6">
    <original>E</original>
    <variation>A</variation>
    <location>
        <position position="109"/>
    </location>
</feature>
<feature type="mutagenesis site" description="40% of the wild-type enzyme activity at pH 7.5 and 27% of the wild-type enzyme activity at pH 4." evidence="6">
    <original>E</original>
    <variation>Q</variation>
    <location>
        <position position="109"/>
    </location>
</feature>
<feature type="mutagenesis site" description="Less than 1% of the wild-type enzyme activity." evidence="6">
    <original>R</original>
    <variation>A</variation>
    <location>
        <position position="134"/>
    </location>
</feature>
<feature type="helix" evidence="16">
    <location>
        <begin position="40"/>
        <end position="51"/>
    </location>
</feature>
<feature type="helix" evidence="16">
    <location>
        <begin position="53"/>
        <end position="63"/>
    </location>
</feature>
<feature type="helix" evidence="16">
    <location>
        <begin position="70"/>
        <end position="86"/>
    </location>
</feature>
<feature type="helix" evidence="16">
    <location>
        <begin position="91"/>
        <end position="118"/>
    </location>
</feature>
<feature type="helix" evidence="16">
    <location>
        <begin position="120"/>
        <end position="122"/>
    </location>
</feature>
<feature type="helix" evidence="16">
    <location>
        <begin position="131"/>
        <end position="150"/>
    </location>
</feature>
<feature type="helix" evidence="16">
    <location>
        <begin position="152"/>
        <end position="155"/>
    </location>
</feature>
<feature type="helix" evidence="16">
    <location>
        <begin position="160"/>
        <end position="174"/>
    </location>
</feature>
<feature type="helix" evidence="16">
    <location>
        <begin position="179"/>
        <end position="188"/>
    </location>
</feature>
<feature type="turn" evidence="16">
    <location>
        <begin position="189"/>
        <end position="191"/>
    </location>
</feature>
<feature type="helix" evidence="15">
    <location>
        <begin position="192"/>
        <end position="194"/>
    </location>
</feature>
<gene>
    <name type="ordered locus">Rv1885c</name>
</gene>
<proteinExistence type="evidence at protein level"/>
<protein>
    <recommendedName>
        <fullName evidence="7">Secreted chorismate mutase</fullName>
        <shortName evidence="7">CM</shortName>
        <ecNumber evidence="2 3">5.4.99.5</ecNumber>
    </recommendedName>
    <alternativeName>
        <fullName evidence="7">*MtCM</fullName>
    </alternativeName>
</protein>
<sequence>MLTRPREIYLATAVSIGILLSLIAPLGPPLARADGTSQLAELVDAAAERLEVADPVAAFKWRAQLPIEDSGRVEQQLAKLGEDARSQHIDPDYVTRVFDDQIRATEAIEYSRFSDWKLNPASAPPEPPDLSASRSAIDSLNNRMLSQIWSHWSLLSAPSCAAQLDRAKRDIVRSRHLDSLYQRALTTATQSYCQALPPA</sequence>
<evidence type="ECO:0000255" key="1">
    <source>
        <dbReference type="PROSITE-ProRule" id="PRU00515"/>
    </source>
</evidence>
<evidence type="ECO:0000269" key="2">
    <source>
    </source>
</evidence>
<evidence type="ECO:0000269" key="3">
    <source>
    </source>
</evidence>
<evidence type="ECO:0000269" key="4">
    <source>
    </source>
</evidence>
<evidence type="ECO:0000269" key="5">
    <source>
    </source>
</evidence>
<evidence type="ECO:0000269" key="6">
    <source>
    </source>
</evidence>
<evidence type="ECO:0000303" key="7">
    <source>
    </source>
</evidence>
<evidence type="ECO:0000305" key="8"/>
<evidence type="ECO:0000305" key="9">
    <source>
    </source>
</evidence>
<evidence type="ECO:0000305" key="10">
    <source>
    </source>
</evidence>
<evidence type="ECO:0007744" key="11">
    <source>
        <dbReference type="PDB" id="2AO2"/>
    </source>
</evidence>
<evidence type="ECO:0007744" key="12">
    <source>
        <dbReference type="PDB" id="2F6L"/>
    </source>
</evidence>
<evidence type="ECO:0007744" key="13">
    <source>
        <dbReference type="PDB" id="2FP1"/>
    </source>
</evidence>
<evidence type="ECO:0007744" key="14">
    <source>
        <dbReference type="PDB" id="2FP2"/>
    </source>
</evidence>
<evidence type="ECO:0007829" key="15">
    <source>
        <dbReference type="PDB" id="2AO2"/>
    </source>
</evidence>
<evidence type="ECO:0007829" key="16">
    <source>
        <dbReference type="PDB" id="2FP1"/>
    </source>
</evidence>
<name>SCMU_MYCTU</name>
<accession>P9WIB9</accession>
<accession>L0T9J1</accession>
<accession>O07746</accession>
<accession>Q7D7U7</accession>
<dbReference type="EC" id="5.4.99.5" evidence="2 3"/>
<dbReference type="EMBL" id="AL123456">
    <property type="protein sequence ID" value="CCP44651.1"/>
    <property type="molecule type" value="Genomic_DNA"/>
</dbReference>
<dbReference type="PIR" id="B70516">
    <property type="entry name" value="B70516"/>
</dbReference>
<dbReference type="RefSeq" id="WP_003899064.1">
    <property type="nucleotide sequence ID" value="NZ_NVQJ01000013.1"/>
</dbReference>
<dbReference type="PDB" id="2AO2">
    <property type="method" value="X-ray"/>
    <property type="resolution" value="2.07 A"/>
    <property type="chains" value="A/B/C=35-199"/>
</dbReference>
<dbReference type="PDB" id="2F6L">
    <property type="method" value="X-ray"/>
    <property type="resolution" value="1.70 A"/>
    <property type="chains" value="A/B=34-199"/>
</dbReference>
<dbReference type="PDB" id="2FP1">
    <property type="method" value="X-ray"/>
    <property type="resolution" value="1.55 A"/>
    <property type="chains" value="A/B=34-199"/>
</dbReference>
<dbReference type="PDB" id="2FP2">
    <property type="method" value="X-ray"/>
    <property type="resolution" value="1.64 A"/>
    <property type="chains" value="A/B=34-199"/>
</dbReference>
<dbReference type="PDB" id="9BT3">
    <property type="method" value="X-ray"/>
    <property type="resolution" value="2.50 A"/>
    <property type="chains" value="A/B/C/D/E/F/G/H=34-199"/>
</dbReference>
<dbReference type="PDB" id="9BT6">
    <property type="method" value="X-ray"/>
    <property type="resolution" value="2.80 A"/>
    <property type="chains" value="A/B/C/D/E/F/G/H=34-199"/>
</dbReference>
<dbReference type="PDB" id="9BT7">
    <property type="method" value="X-ray"/>
    <property type="resolution" value="1.80 A"/>
    <property type="chains" value="A/B=34-199"/>
</dbReference>
<dbReference type="PDBsum" id="2AO2"/>
<dbReference type="PDBsum" id="2F6L"/>
<dbReference type="PDBsum" id="2FP1"/>
<dbReference type="PDBsum" id="2FP2"/>
<dbReference type="PDBsum" id="9BT3"/>
<dbReference type="PDBsum" id="9BT6"/>
<dbReference type="PDBsum" id="9BT7"/>
<dbReference type="SMR" id="P9WIB9"/>
<dbReference type="FunCoup" id="P9WIB9">
    <property type="interactions" value="109"/>
</dbReference>
<dbReference type="STRING" id="83332.Rv1885c"/>
<dbReference type="BindingDB" id="P9WIB9"/>
<dbReference type="ChEMBL" id="CHEMBL6066"/>
<dbReference type="DrugBank" id="DB08648">
    <property type="generic name" value="8-Hydroxy-2-oxa-bicyclo[3.3.1]non-6-ene-3,5-dicarboxylic acid"/>
</dbReference>
<dbReference type="PaxDb" id="83332-Rv1885c"/>
<dbReference type="DNASU" id="885772"/>
<dbReference type="GeneID" id="885772"/>
<dbReference type="KEGG" id="mtu:Rv1885c"/>
<dbReference type="KEGG" id="mtv:RVBD_1885c"/>
<dbReference type="TubercuList" id="Rv1885c"/>
<dbReference type="eggNOG" id="COG1605">
    <property type="taxonomic scope" value="Bacteria"/>
</dbReference>
<dbReference type="InParanoid" id="P9WIB9"/>
<dbReference type="OrthoDB" id="3825510at2"/>
<dbReference type="PhylomeDB" id="P9WIB9"/>
<dbReference type="BRENDA" id="5.4.99.5">
    <property type="organism ID" value="3445"/>
</dbReference>
<dbReference type="SABIO-RK" id="P9WIB9"/>
<dbReference type="UniPathway" id="UPA00120">
    <property type="reaction ID" value="UER00203"/>
</dbReference>
<dbReference type="EvolutionaryTrace" id="P9WIB9"/>
<dbReference type="PRO" id="PR:P9WIB9"/>
<dbReference type="Proteomes" id="UP000001584">
    <property type="component" value="Chromosome"/>
</dbReference>
<dbReference type="GO" id="GO:0005576">
    <property type="term" value="C:extracellular region"/>
    <property type="evidence" value="ECO:0000314"/>
    <property type="project" value="MTBBASE"/>
</dbReference>
<dbReference type="GO" id="GO:0004106">
    <property type="term" value="F:chorismate mutase activity"/>
    <property type="evidence" value="ECO:0000314"/>
    <property type="project" value="UniProtKB"/>
</dbReference>
<dbReference type="GO" id="GO:0046417">
    <property type="term" value="P:chorismate metabolic process"/>
    <property type="evidence" value="ECO:0000314"/>
    <property type="project" value="UniProtKB"/>
</dbReference>
<dbReference type="GO" id="GO:0009697">
    <property type="term" value="P:salicylic acid biosynthetic process"/>
    <property type="evidence" value="ECO:0000318"/>
    <property type="project" value="GO_Central"/>
</dbReference>
<dbReference type="FunFam" id="1.20.59.10:FF:000007">
    <property type="entry name" value="Secreted chorismate mutase"/>
    <property type="match status" value="1"/>
</dbReference>
<dbReference type="Gene3D" id="1.20.59.10">
    <property type="entry name" value="Chorismate mutase"/>
    <property type="match status" value="1"/>
</dbReference>
<dbReference type="InterPro" id="IPR036263">
    <property type="entry name" value="Chorismate_II_sf"/>
</dbReference>
<dbReference type="InterPro" id="IPR051331">
    <property type="entry name" value="Chorismate_mutase-related"/>
</dbReference>
<dbReference type="InterPro" id="IPR008240">
    <property type="entry name" value="Chorismate_mutase_periplasmic"/>
</dbReference>
<dbReference type="InterPro" id="IPR036979">
    <property type="entry name" value="CM_dom_sf"/>
</dbReference>
<dbReference type="InterPro" id="IPR002701">
    <property type="entry name" value="CM_II_prokaryot"/>
</dbReference>
<dbReference type="NCBIfam" id="TIGR01806">
    <property type="entry name" value="CM_mono2"/>
    <property type="match status" value="1"/>
</dbReference>
<dbReference type="NCBIfam" id="NF006741">
    <property type="entry name" value="PRK09269.1"/>
    <property type="match status" value="1"/>
</dbReference>
<dbReference type="PANTHER" id="PTHR38041">
    <property type="entry name" value="CHORISMATE MUTASE"/>
    <property type="match status" value="1"/>
</dbReference>
<dbReference type="PANTHER" id="PTHR38041:SF2">
    <property type="entry name" value="SECRETED CHORISMATE MUTASE"/>
    <property type="match status" value="1"/>
</dbReference>
<dbReference type="Pfam" id="PF01817">
    <property type="entry name" value="CM_2"/>
    <property type="match status" value="1"/>
</dbReference>
<dbReference type="PIRSF" id="PIRSF026640">
    <property type="entry name" value="Peripl_chor_mut"/>
    <property type="match status" value="1"/>
</dbReference>
<dbReference type="SMART" id="SM00830">
    <property type="entry name" value="CM_2"/>
    <property type="match status" value="1"/>
</dbReference>
<dbReference type="SUPFAM" id="SSF48600">
    <property type="entry name" value="Chorismate mutase II"/>
    <property type="match status" value="1"/>
</dbReference>
<dbReference type="PROSITE" id="PS51168">
    <property type="entry name" value="CHORISMATE_MUT_2"/>
    <property type="match status" value="1"/>
</dbReference>